<gene>
    <name evidence="1" type="primary">rpmA</name>
    <name type="ordered locus">Bind_0417</name>
</gene>
<keyword id="KW-1185">Reference proteome</keyword>
<keyword id="KW-0687">Ribonucleoprotein</keyword>
<keyword id="KW-0689">Ribosomal protein</keyword>
<proteinExistence type="inferred from homology"/>
<protein>
    <recommendedName>
        <fullName evidence="1">Large ribosomal subunit protein bL27</fullName>
    </recommendedName>
    <alternativeName>
        <fullName evidence="3">50S ribosomal protein L27</fullName>
    </alternativeName>
</protein>
<reference key="1">
    <citation type="journal article" date="2010" name="J. Bacteriol.">
        <title>Complete genome sequence of Beijerinckia indica subsp. indica.</title>
        <authorList>
            <person name="Tamas I."/>
            <person name="Dedysh S.N."/>
            <person name="Liesack W."/>
            <person name="Stott M.B."/>
            <person name="Alam M."/>
            <person name="Murrell J.C."/>
            <person name="Dunfield P.F."/>
        </authorList>
    </citation>
    <scope>NUCLEOTIDE SEQUENCE [LARGE SCALE GENOMIC DNA]</scope>
    <source>
        <strain>ATCC 9039 / DSM 1715 / NCIMB 8712</strain>
    </source>
</reference>
<name>RL27_BEII9</name>
<organism>
    <name type="scientific">Beijerinckia indica subsp. indica (strain ATCC 9039 / DSM 1715 / NCIMB 8712)</name>
    <dbReference type="NCBI Taxonomy" id="395963"/>
    <lineage>
        <taxon>Bacteria</taxon>
        <taxon>Pseudomonadati</taxon>
        <taxon>Pseudomonadota</taxon>
        <taxon>Alphaproteobacteria</taxon>
        <taxon>Hyphomicrobiales</taxon>
        <taxon>Beijerinckiaceae</taxon>
        <taxon>Beijerinckia</taxon>
    </lineage>
</organism>
<evidence type="ECO:0000255" key="1">
    <source>
        <dbReference type="HAMAP-Rule" id="MF_00539"/>
    </source>
</evidence>
<evidence type="ECO:0000256" key="2">
    <source>
        <dbReference type="SAM" id="MobiDB-lite"/>
    </source>
</evidence>
<evidence type="ECO:0000305" key="3"/>
<dbReference type="EMBL" id="CP001016">
    <property type="protein sequence ID" value="ACB94070.1"/>
    <property type="molecule type" value="Genomic_DNA"/>
</dbReference>
<dbReference type="RefSeq" id="WP_012383428.1">
    <property type="nucleotide sequence ID" value="NC_010581.1"/>
</dbReference>
<dbReference type="SMR" id="B2IE46"/>
<dbReference type="STRING" id="395963.Bind_0417"/>
<dbReference type="KEGG" id="bid:Bind_0417"/>
<dbReference type="eggNOG" id="COG0211">
    <property type="taxonomic scope" value="Bacteria"/>
</dbReference>
<dbReference type="HOGENOM" id="CLU_095424_4_1_5"/>
<dbReference type="OrthoDB" id="9803474at2"/>
<dbReference type="Proteomes" id="UP000001695">
    <property type="component" value="Chromosome"/>
</dbReference>
<dbReference type="GO" id="GO:0022625">
    <property type="term" value="C:cytosolic large ribosomal subunit"/>
    <property type="evidence" value="ECO:0007669"/>
    <property type="project" value="TreeGrafter"/>
</dbReference>
<dbReference type="GO" id="GO:0003735">
    <property type="term" value="F:structural constituent of ribosome"/>
    <property type="evidence" value="ECO:0007669"/>
    <property type="project" value="InterPro"/>
</dbReference>
<dbReference type="GO" id="GO:0006412">
    <property type="term" value="P:translation"/>
    <property type="evidence" value="ECO:0007669"/>
    <property type="project" value="UniProtKB-UniRule"/>
</dbReference>
<dbReference type="FunFam" id="2.40.50.100:FF:000020">
    <property type="entry name" value="50S ribosomal protein L27"/>
    <property type="match status" value="1"/>
</dbReference>
<dbReference type="Gene3D" id="2.40.50.100">
    <property type="match status" value="1"/>
</dbReference>
<dbReference type="HAMAP" id="MF_00539">
    <property type="entry name" value="Ribosomal_bL27"/>
    <property type="match status" value="1"/>
</dbReference>
<dbReference type="InterPro" id="IPR001684">
    <property type="entry name" value="Ribosomal_bL27"/>
</dbReference>
<dbReference type="InterPro" id="IPR018261">
    <property type="entry name" value="Ribosomal_bL27_CS"/>
</dbReference>
<dbReference type="NCBIfam" id="TIGR00062">
    <property type="entry name" value="L27"/>
    <property type="match status" value="1"/>
</dbReference>
<dbReference type="PANTHER" id="PTHR15893:SF0">
    <property type="entry name" value="LARGE RIBOSOMAL SUBUNIT PROTEIN BL27M"/>
    <property type="match status" value="1"/>
</dbReference>
<dbReference type="PANTHER" id="PTHR15893">
    <property type="entry name" value="RIBOSOMAL PROTEIN L27"/>
    <property type="match status" value="1"/>
</dbReference>
<dbReference type="Pfam" id="PF01016">
    <property type="entry name" value="Ribosomal_L27"/>
    <property type="match status" value="1"/>
</dbReference>
<dbReference type="PRINTS" id="PR00063">
    <property type="entry name" value="RIBOSOMALL27"/>
</dbReference>
<dbReference type="SUPFAM" id="SSF110324">
    <property type="entry name" value="Ribosomal L27 protein-like"/>
    <property type="match status" value="1"/>
</dbReference>
<dbReference type="PROSITE" id="PS00831">
    <property type="entry name" value="RIBOSOMAL_L27"/>
    <property type="match status" value="1"/>
</dbReference>
<comment type="similarity">
    <text evidence="1">Belongs to the bacterial ribosomal protein bL27 family.</text>
</comment>
<accession>B2IE46</accession>
<sequence length="91" mass="9589">MAHKKAGGSSRNGRDSDGRRLGVKKFGGEAVIGGNIIVRQRGTKWHPGSNVGIGKDHTLFALTAGQVFFQTKANGRSYISVIPPKAAEAAE</sequence>
<feature type="chain" id="PRO_1000128696" description="Large ribosomal subunit protein bL27">
    <location>
        <begin position="1"/>
        <end position="91"/>
    </location>
</feature>
<feature type="region of interest" description="Disordered" evidence="2">
    <location>
        <begin position="1"/>
        <end position="22"/>
    </location>
</feature>